<dbReference type="EC" id="2.7.11.1"/>
<dbReference type="EMBL" id="AY336056">
    <property type="protein sequence ID" value="AAQ01590.1"/>
    <property type="molecule type" value="mRNA"/>
</dbReference>
<dbReference type="RefSeq" id="NP_989797.1">
    <property type="nucleotide sequence ID" value="NM_204466.1"/>
</dbReference>
<dbReference type="SMR" id="Q7T0B1"/>
<dbReference type="FunCoup" id="Q7T0B1">
    <property type="interactions" value="1404"/>
</dbReference>
<dbReference type="STRING" id="9031.ENSGALP00000073093"/>
<dbReference type="PaxDb" id="9031-ENSGALP00000040176"/>
<dbReference type="GeneID" id="395120"/>
<dbReference type="KEGG" id="gga:395120"/>
<dbReference type="CTD" id="83931"/>
<dbReference type="VEuPathDB" id="HostDB:geneid_395120"/>
<dbReference type="eggNOG" id="KOG0583">
    <property type="taxonomic scope" value="Eukaryota"/>
</dbReference>
<dbReference type="InParanoid" id="Q7T0B1"/>
<dbReference type="OrthoDB" id="410920at2759"/>
<dbReference type="PhylomeDB" id="Q7T0B1"/>
<dbReference type="PRO" id="PR:Q7T0B1"/>
<dbReference type="Proteomes" id="UP000000539">
    <property type="component" value="Unassembled WGS sequence"/>
</dbReference>
<dbReference type="GO" id="GO:0005737">
    <property type="term" value="C:cytoplasm"/>
    <property type="evidence" value="ECO:0007669"/>
    <property type="project" value="UniProtKB-SubCell"/>
</dbReference>
<dbReference type="GO" id="GO:0005634">
    <property type="term" value="C:nucleus"/>
    <property type="evidence" value="ECO:0007669"/>
    <property type="project" value="UniProtKB-SubCell"/>
</dbReference>
<dbReference type="GO" id="GO:0005524">
    <property type="term" value="F:ATP binding"/>
    <property type="evidence" value="ECO:0007669"/>
    <property type="project" value="UniProtKB-KW"/>
</dbReference>
<dbReference type="GO" id="GO:0106310">
    <property type="term" value="F:protein serine kinase activity"/>
    <property type="evidence" value="ECO:0007669"/>
    <property type="project" value="RHEA"/>
</dbReference>
<dbReference type="GO" id="GO:0004674">
    <property type="term" value="F:protein serine/threonine kinase activity"/>
    <property type="evidence" value="ECO:0007669"/>
    <property type="project" value="UniProtKB-KW"/>
</dbReference>
<dbReference type="GO" id="GO:0043408">
    <property type="term" value="P:regulation of MAPK cascade"/>
    <property type="evidence" value="ECO:0000318"/>
    <property type="project" value="GO_Central"/>
</dbReference>
<dbReference type="CDD" id="cd13974">
    <property type="entry name" value="STKc_SHIK"/>
    <property type="match status" value="1"/>
</dbReference>
<dbReference type="FunFam" id="1.10.510.10:FF:000269">
    <property type="entry name" value="Serine/threonine-protein kinase 40"/>
    <property type="match status" value="1"/>
</dbReference>
<dbReference type="Gene3D" id="1.10.510.10">
    <property type="entry name" value="Transferase(Phosphotransferase) domain 1"/>
    <property type="match status" value="1"/>
</dbReference>
<dbReference type="InterPro" id="IPR011009">
    <property type="entry name" value="Kinase-like_dom_sf"/>
</dbReference>
<dbReference type="InterPro" id="IPR000719">
    <property type="entry name" value="Prot_kinase_dom"/>
</dbReference>
<dbReference type="InterPro" id="IPR024236">
    <property type="entry name" value="Ser/Thr_kinase_40"/>
</dbReference>
<dbReference type="InterPro" id="IPR008271">
    <property type="entry name" value="Ser/Thr_kinase_AS"/>
</dbReference>
<dbReference type="InterPro" id="IPR024104">
    <property type="entry name" value="Tribbles/Ser_Thr_kinase_40"/>
</dbReference>
<dbReference type="PANTHER" id="PTHR22961">
    <property type="entry name" value="SER/THR PROTEIN KINASE-TRB"/>
    <property type="match status" value="1"/>
</dbReference>
<dbReference type="PANTHER" id="PTHR22961:SF16">
    <property type="entry name" value="SERINE_THREONINE-PROTEIN KINASE 40"/>
    <property type="match status" value="1"/>
</dbReference>
<dbReference type="Pfam" id="PF00069">
    <property type="entry name" value="Pkinase"/>
    <property type="match status" value="1"/>
</dbReference>
<dbReference type="SMART" id="SM00220">
    <property type="entry name" value="S_TKc"/>
    <property type="match status" value="1"/>
</dbReference>
<dbReference type="SUPFAM" id="SSF56112">
    <property type="entry name" value="Protein kinase-like (PK-like)"/>
    <property type="match status" value="1"/>
</dbReference>
<dbReference type="PROSITE" id="PS50011">
    <property type="entry name" value="PROTEIN_KINASE_DOM"/>
    <property type="match status" value="1"/>
</dbReference>
<dbReference type="PROSITE" id="PS00108">
    <property type="entry name" value="PROTEIN_KINASE_ST"/>
    <property type="match status" value="1"/>
</dbReference>
<accession>Q7T0B1</accession>
<name>STK40_CHICK</name>
<reference key="1">
    <citation type="submission" date="2003-07" db="EMBL/GenBank/DDBJ databases">
        <title>Cloning and characterization of human, mouse, rat, chick and frog lyk4 gene.</title>
        <authorList>
            <person name="Shan Y.X."/>
            <person name="Yu L."/>
        </authorList>
    </citation>
    <scope>NUCLEOTIDE SEQUENCE [MRNA]</scope>
    <source>
        <tissue>Liver</tissue>
    </source>
</reference>
<comment type="function">
    <text evidence="1">May be a negative regulator of NF-kappa-B and p53-mediated gene transcription.</text>
</comment>
<comment type="catalytic activity">
    <reaction>
        <text>L-seryl-[protein] + ATP = O-phospho-L-seryl-[protein] + ADP + H(+)</text>
        <dbReference type="Rhea" id="RHEA:17989"/>
        <dbReference type="Rhea" id="RHEA-COMP:9863"/>
        <dbReference type="Rhea" id="RHEA-COMP:11604"/>
        <dbReference type="ChEBI" id="CHEBI:15378"/>
        <dbReference type="ChEBI" id="CHEBI:29999"/>
        <dbReference type="ChEBI" id="CHEBI:30616"/>
        <dbReference type="ChEBI" id="CHEBI:83421"/>
        <dbReference type="ChEBI" id="CHEBI:456216"/>
        <dbReference type="EC" id="2.7.11.1"/>
    </reaction>
</comment>
<comment type="catalytic activity">
    <reaction>
        <text>L-threonyl-[protein] + ATP = O-phospho-L-threonyl-[protein] + ADP + H(+)</text>
        <dbReference type="Rhea" id="RHEA:46608"/>
        <dbReference type="Rhea" id="RHEA-COMP:11060"/>
        <dbReference type="Rhea" id="RHEA-COMP:11605"/>
        <dbReference type="ChEBI" id="CHEBI:15378"/>
        <dbReference type="ChEBI" id="CHEBI:30013"/>
        <dbReference type="ChEBI" id="CHEBI:30616"/>
        <dbReference type="ChEBI" id="CHEBI:61977"/>
        <dbReference type="ChEBI" id="CHEBI:456216"/>
        <dbReference type="EC" id="2.7.11.1"/>
    </reaction>
</comment>
<comment type="subcellular location">
    <subcellularLocation>
        <location evidence="1">Nucleus</location>
    </subcellularLocation>
    <subcellularLocation>
        <location evidence="1">Cytoplasm</location>
    </subcellularLocation>
</comment>
<comment type="similarity">
    <text evidence="4">Belongs to the protein kinase superfamily. CAMK Ser/Thr protein kinase family.</text>
</comment>
<sequence>MKRRASDRGAGETSTKAKALCTGISGNNAKRAGPFILGPRLGNSPVPSIVQCLARKDGTDDFYQLKILTLEERGDKGIETQEERQGKMLLHTEYSLLSLLHNQEGVVHHHGLFQDRACEIIEDLEANRMVRKMKKRICLVLDCLCAHDFSDKTADLINLQHYVIKEKRLSERETVVIFYDVVRVVEALHKKNIVHRDLKLGNMVLNKRTHRITITNFCLGKHLVSEDDLLKDQRGSPAYISPDVLSGRPYRGKPSDMWALGVVLFTMLYGQFPFYDSIPQELFRKIKAAEYTIPEDGRVSENTVCLIRKLLVLDPQQRLTASEELDSLSSIIASWQSMSLLSGPLQVVPDIDDQVANPEHPQEAKVTEECSQYEFENYMRQQLLLAEEKNTLHEAKSFLQKRQFGNIPPVRRLGHDAQPMNPLDAAILAQRYLRK</sequence>
<gene>
    <name type="primary">STK40</name>
</gene>
<protein>
    <recommendedName>
        <fullName>Serine/threonine-protein kinase 40</fullName>
        <ecNumber>2.7.11.1</ecNumber>
    </recommendedName>
    <alternativeName>
        <fullName>Serine/threonine-protein kinase lyk4</fullName>
    </alternativeName>
</protein>
<keyword id="KW-0067">ATP-binding</keyword>
<keyword id="KW-0963">Cytoplasm</keyword>
<keyword id="KW-0418">Kinase</keyword>
<keyword id="KW-0547">Nucleotide-binding</keyword>
<keyword id="KW-0539">Nucleus</keyword>
<keyword id="KW-1185">Reference proteome</keyword>
<keyword id="KW-0723">Serine/threonine-protein kinase</keyword>
<keyword id="KW-0808">Transferase</keyword>
<evidence type="ECO:0000250" key="1"/>
<evidence type="ECO:0000255" key="2">
    <source>
        <dbReference type="PROSITE-ProRule" id="PRU00159"/>
    </source>
</evidence>
<evidence type="ECO:0000255" key="3">
    <source>
        <dbReference type="PROSITE-ProRule" id="PRU10027"/>
    </source>
</evidence>
<evidence type="ECO:0000305" key="4"/>
<organism>
    <name type="scientific">Gallus gallus</name>
    <name type="common">Chicken</name>
    <dbReference type="NCBI Taxonomy" id="9031"/>
    <lineage>
        <taxon>Eukaryota</taxon>
        <taxon>Metazoa</taxon>
        <taxon>Chordata</taxon>
        <taxon>Craniata</taxon>
        <taxon>Vertebrata</taxon>
        <taxon>Euteleostomi</taxon>
        <taxon>Archelosauria</taxon>
        <taxon>Archosauria</taxon>
        <taxon>Dinosauria</taxon>
        <taxon>Saurischia</taxon>
        <taxon>Theropoda</taxon>
        <taxon>Coelurosauria</taxon>
        <taxon>Aves</taxon>
        <taxon>Neognathae</taxon>
        <taxon>Galloanserae</taxon>
        <taxon>Galliformes</taxon>
        <taxon>Phasianidae</taxon>
        <taxon>Phasianinae</taxon>
        <taxon>Gallus</taxon>
    </lineage>
</organism>
<feature type="chain" id="PRO_0000252265" description="Serine/threonine-protein kinase 40">
    <location>
        <begin position="1"/>
        <end position="435"/>
    </location>
</feature>
<feature type="domain" description="Protein kinase" evidence="2">
    <location>
        <begin position="35"/>
        <end position="332"/>
    </location>
</feature>
<feature type="active site" description="Proton acceptor" evidence="2 3">
    <location>
        <position position="197"/>
    </location>
</feature>
<feature type="binding site" evidence="2">
    <location>
        <begin position="41"/>
        <end position="49"/>
    </location>
    <ligand>
        <name>ATP</name>
        <dbReference type="ChEBI" id="CHEBI:30616"/>
    </ligand>
</feature>
<feature type="binding site" evidence="2">
    <location>
        <position position="66"/>
    </location>
    <ligand>
        <name>ATP</name>
        <dbReference type="ChEBI" id="CHEBI:30616"/>
    </ligand>
</feature>
<proteinExistence type="evidence at transcript level"/>